<sequence>FPYQGSSIMLESGKVNDYEVVYPQRLAPLPEGAVQQKYEDTMQYEFKVNGETIGLHMEKSKGLFSKDYSETHYSPDGRKITTYPSVEDHCYYHGRIENYEDSTASISACNGLKGHFKIQGETYFIESLKLSDSEAHAVFKYENVEKEDETHKMCGVTQNWKSYDPIKKPSWVNLTPKQQTWPQTSVNLQLVVDRSMYAKYNSDSEKITQTLQERVNIMKEIFKPLNLDITLSVIEMWDKKDLITVKTAATDTLKLFPKWRQTDLLKRIDNDNAQLQTAVDFDGETVGLAFKGTMCDKRYSAGIIQDHSAIPLLMAVTMAHELGHNLGMDHDDTYKCNCNVCIMPPRLNTNPSKTFSDCSNNDYQKFLTDKKPKCIHKKSLKTDTVSTSVSGNEPLDDNVDGFHA</sequence>
<reference key="1">
    <citation type="journal article" date="2000" name="Eur. J. Biochem.">
        <title>Purification, cloning and sequence analyses for pro-metalloprotease-disintegrin variants from Deinagkistrodon acutus venom and subclassification of the small venom metalloproteases.</title>
        <authorList>
            <person name="Tsai I.-H."/>
            <person name="Wang Y.-M."/>
            <person name="Chiang T.-Y."/>
            <person name="Chen Y.-L."/>
            <person name="Huang R.-J."/>
        </authorList>
    </citation>
    <scope>NUCLEOTIDE SEQUENCE [MRNA]</scope>
    <scope>PROTEIN SEQUENCE OF 180-186</scope>
    <scope>FUNCTION</scope>
    <scope>MASS SPECTROMETRY</scope>
    <source>
        <tissue>Venom gland</tissue>
    </source>
</reference>
<comment type="function">
    <text evidence="6">This probable venom zinc protease is not hemorrhagic when 3 ug are injected onto the back skin of guinea pig.</text>
</comment>
<comment type="cofactor">
    <cofactor evidence="1">
        <name>Zn(2+)</name>
        <dbReference type="ChEBI" id="CHEBI:29105"/>
    </cofactor>
    <text evidence="1">Binds 1 zinc ion per subunit.</text>
</comment>
<comment type="subunit">
    <text evidence="1">Monomer.</text>
</comment>
<comment type="subcellular location">
    <subcellularLocation>
        <location evidence="1">Secreted</location>
    </subcellularLocation>
</comment>
<comment type="tissue specificity">
    <text>Expressed by the venom gland.</text>
</comment>
<comment type="mass spectrometry"/>
<comment type="similarity">
    <text evidence="7">Belongs to the venom metalloproteinase (M12B) family. P-I subfamily.</text>
</comment>
<protein>
    <recommendedName>
        <fullName>Snake venom metalloproteinase H5</fullName>
        <shortName>SVMP</shortName>
        <ecNumber>3.4.24.-</ecNumber>
    </recommendedName>
</protein>
<accession>Q9IAY2</accession>
<dbReference type="EC" id="3.4.24.-"/>
<dbReference type="EMBL" id="AF098310">
    <property type="protein sequence ID" value="AAF61185.1"/>
    <property type="molecule type" value="mRNA"/>
</dbReference>
<dbReference type="SMR" id="Q9IAY2"/>
<dbReference type="MEROPS" id="M12.337"/>
<dbReference type="GO" id="GO:0005576">
    <property type="term" value="C:extracellular region"/>
    <property type="evidence" value="ECO:0007669"/>
    <property type="project" value="UniProtKB-SubCell"/>
</dbReference>
<dbReference type="GO" id="GO:0005886">
    <property type="term" value="C:plasma membrane"/>
    <property type="evidence" value="ECO:0007669"/>
    <property type="project" value="TreeGrafter"/>
</dbReference>
<dbReference type="GO" id="GO:0046872">
    <property type="term" value="F:metal ion binding"/>
    <property type="evidence" value="ECO:0007669"/>
    <property type="project" value="UniProtKB-KW"/>
</dbReference>
<dbReference type="GO" id="GO:0004222">
    <property type="term" value="F:metalloendopeptidase activity"/>
    <property type="evidence" value="ECO:0007669"/>
    <property type="project" value="InterPro"/>
</dbReference>
<dbReference type="GO" id="GO:0006508">
    <property type="term" value="P:proteolysis"/>
    <property type="evidence" value="ECO:0007669"/>
    <property type="project" value="UniProtKB-KW"/>
</dbReference>
<dbReference type="CDD" id="cd04269">
    <property type="entry name" value="ZnMc_adamalysin_II_like"/>
    <property type="match status" value="1"/>
</dbReference>
<dbReference type="FunFam" id="3.40.390.10:FF:000002">
    <property type="entry name" value="Disintegrin and metalloproteinase domain-containing protein 22"/>
    <property type="match status" value="1"/>
</dbReference>
<dbReference type="Gene3D" id="3.40.390.10">
    <property type="entry name" value="Collagenase (Catalytic Domain)"/>
    <property type="match status" value="1"/>
</dbReference>
<dbReference type="InterPro" id="IPR024079">
    <property type="entry name" value="MetalloPept_cat_dom_sf"/>
</dbReference>
<dbReference type="InterPro" id="IPR001590">
    <property type="entry name" value="Peptidase_M12B"/>
</dbReference>
<dbReference type="InterPro" id="IPR002870">
    <property type="entry name" value="Peptidase_M12B_N"/>
</dbReference>
<dbReference type="InterPro" id="IPR034027">
    <property type="entry name" value="Reprolysin_adamalysin"/>
</dbReference>
<dbReference type="PANTHER" id="PTHR11905">
    <property type="entry name" value="ADAM A DISINTEGRIN AND METALLOPROTEASE DOMAIN"/>
    <property type="match status" value="1"/>
</dbReference>
<dbReference type="PANTHER" id="PTHR11905:SF32">
    <property type="entry name" value="DISINTEGRIN AND METALLOPROTEINASE DOMAIN-CONTAINING PROTEIN 28"/>
    <property type="match status" value="1"/>
</dbReference>
<dbReference type="Pfam" id="PF01562">
    <property type="entry name" value="Pep_M12B_propep"/>
    <property type="match status" value="1"/>
</dbReference>
<dbReference type="Pfam" id="PF01421">
    <property type="entry name" value="Reprolysin"/>
    <property type="match status" value="1"/>
</dbReference>
<dbReference type="SUPFAM" id="SSF55486">
    <property type="entry name" value="Metalloproteases ('zincins'), catalytic domain"/>
    <property type="match status" value="1"/>
</dbReference>
<dbReference type="PROSITE" id="PS50215">
    <property type="entry name" value="ADAM_MEPRO"/>
    <property type="match status" value="1"/>
</dbReference>
<dbReference type="PROSITE" id="PS00142">
    <property type="entry name" value="ZINC_PROTEASE"/>
    <property type="match status" value="1"/>
</dbReference>
<keyword id="KW-0903">Direct protein sequencing</keyword>
<keyword id="KW-1015">Disulfide bond</keyword>
<keyword id="KW-0378">Hydrolase</keyword>
<keyword id="KW-0479">Metal-binding</keyword>
<keyword id="KW-0482">Metalloprotease</keyword>
<keyword id="KW-0645">Protease</keyword>
<keyword id="KW-0964">Secreted</keyword>
<keyword id="KW-0732">Signal</keyword>
<keyword id="KW-0862">Zinc</keyword>
<keyword id="KW-0865">Zymogen</keyword>
<evidence type="ECO:0000250" key="1"/>
<evidence type="ECO:0000255" key="2"/>
<evidence type="ECO:0000255" key="3">
    <source>
        <dbReference type="PROSITE-ProRule" id="PRU00276"/>
    </source>
</evidence>
<evidence type="ECO:0000255" key="4">
    <source>
        <dbReference type="PROSITE-ProRule" id="PRU10095"/>
    </source>
</evidence>
<evidence type="ECO:0000256" key="5">
    <source>
        <dbReference type="SAM" id="MobiDB-lite"/>
    </source>
</evidence>
<evidence type="ECO:0000269" key="6">
    <source>
    </source>
</evidence>
<evidence type="ECO:0000305" key="7"/>
<name>VM1H5_DEIAC</name>
<feature type="signal peptide" evidence="2">
    <location>
        <begin position="1" status="less than"/>
        <end position="6"/>
    </location>
</feature>
<feature type="propeptide" id="PRO_0000322623" evidence="1">
    <location>
        <begin position="7"/>
        <end position="177"/>
    </location>
</feature>
<feature type="chain" id="PRO_5000055236" description="Snake venom metalloproteinase H5">
    <location>
        <begin position="178"/>
        <end position="378"/>
    </location>
</feature>
<feature type="propeptide" id="PRO_0000322624" evidence="1">
    <location>
        <begin position="379"/>
        <end position="404"/>
    </location>
</feature>
<feature type="domain" description="Peptidase M12B" evidence="3">
    <location>
        <begin position="184"/>
        <end position="379"/>
    </location>
</feature>
<feature type="region of interest" description="Disordered" evidence="5">
    <location>
        <begin position="385"/>
        <end position="404"/>
    </location>
</feature>
<feature type="compositionally biased region" description="Acidic residues" evidence="5">
    <location>
        <begin position="394"/>
        <end position="404"/>
    </location>
</feature>
<feature type="active site" evidence="3 4">
    <location>
        <position position="321"/>
    </location>
</feature>
<feature type="binding site" evidence="1">
    <location>
        <position position="320"/>
    </location>
    <ligand>
        <name>Zn(2+)</name>
        <dbReference type="ChEBI" id="CHEBI:29105"/>
        <note>catalytic</note>
    </ligand>
</feature>
<feature type="binding site" evidence="1">
    <location>
        <position position="324"/>
    </location>
    <ligand>
        <name>Zn(2+)</name>
        <dbReference type="ChEBI" id="CHEBI:29105"/>
        <note>catalytic</note>
    </ligand>
</feature>
<feature type="binding site" evidence="1">
    <location>
        <position position="330"/>
    </location>
    <ligand>
        <name>Zn(2+)</name>
        <dbReference type="ChEBI" id="CHEBI:29105"/>
        <note>catalytic</note>
    </ligand>
</feature>
<feature type="disulfide bond" evidence="3">
    <location>
        <begin position="295"/>
        <end position="374"/>
    </location>
</feature>
<feature type="disulfide bond" evidence="3">
    <location>
        <begin position="336"/>
        <end position="358"/>
    </location>
</feature>
<feature type="disulfide bond" evidence="3">
    <location>
        <begin position="338"/>
        <end position="341"/>
    </location>
</feature>
<feature type="non-terminal residue">
    <location>
        <position position="1"/>
    </location>
</feature>
<organism>
    <name type="scientific">Deinagkistrodon acutus</name>
    <name type="common">Hundred-pace snake</name>
    <name type="synonym">Agkistrodon acutus</name>
    <dbReference type="NCBI Taxonomy" id="36307"/>
    <lineage>
        <taxon>Eukaryota</taxon>
        <taxon>Metazoa</taxon>
        <taxon>Chordata</taxon>
        <taxon>Craniata</taxon>
        <taxon>Vertebrata</taxon>
        <taxon>Euteleostomi</taxon>
        <taxon>Lepidosauria</taxon>
        <taxon>Squamata</taxon>
        <taxon>Bifurcata</taxon>
        <taxon>Unidentata</taxon>
        <taxon>Episquamata</taxon>
        <taxon>Toxicofera</taxon>
        <taxon>Serpentes</taxon>
        <taxon>Colubroidea</taxon>
        <taxon>Viperidae</taxon>
        <taxon>Crotalinae</taxon>
        <taxon>Deinagkistrodon</taxon>
    </lineage>
</organism>
<proteinExistence type="evidence at protein level"/>